<proteinExistence type="inferred from homology"/>
<name>PGK_RHOE4</name>
<evidence type="ECO:0000255" key="1">
    <source>
        <dbReference type="HAMAP-Rule" id="MF_00145"/>
    </source>
</evidence>
<accession>C0ZZF3</accession>
<gene>
    <name evidence="1" type="primary">pgk</name>
    <name type="ordered locus">RER_30300</name>
</gene>
<keyword id="KW-0067">ATP-binding</keyword>
<keyword id="KW-0963">Cytoplasm</keyword>
<keyword id="KW-0324">Glycolysis</keyword>
<keyword id="KW-0418">Kinase</keyword>
<keyword id="KW-0547">Nucleotide-binding</keyword>
<keyword id="KW-0808">Transferase</keyword>
<protein>
    <recommendedName>
        <fullName evidence="1">Phosphoglycerate kinase</fullName>
        <ecNumber evidence="1">2.7.2.3</ecNumber>
    </recommendedName>
</protein>
<comment type="catalytic activity">
    <reaction evidence="1">
        <text>(2R)-3-phosphoglycerate + ATP = (2R)-3-phospho-glyceroyl phosphate + ADP</text>
        <dbReference type="Rhea" id="RHEA:14801"/>
        <dbReference type="ChEBI" id="CHEBI:30616"/>
        <dbReference type="ChEBI" id="CHEBI:57604"/>
        <dbReference type="ChEBI" id="CHEBI:58272"/>
        <dbReference type="ChEBI" id="CHEBI:456216"/>
        <dbReference type="EC" id="2.7.2.3"/>
    </reaction>
</comment>
<comment type="pathway">
    <text evidence="1">Carbohydrate degradation; glycolysis; pyruvate from D-glyceraldehyde 3-phosphate: step 2/5.</text>
</comment>
<comment type="subunit">
    <text evidence="1">Monomer.</text>
</comment>
<comment type="subcellular location">
    <subcellularLocation>
        <location evidence="1">Cytoplasm</location>
    </subcellularLocation>
</comment>
<comment type="similarity">
    <text evidence="1">Belongs to the phosphoglycerate kinase family.</text>
</comment>
<reference key="1">
    <citation type="submission" date="2005-03" db="EMBL/GenBank/DDBJ databases">
        <title>Comparison of the complete genome sequences of Rhodococcus erythropolis PR4 and Rhodococcus opacus B4.</title>
        <authorList>
            <person name="Takarada H."/>
            <person name="Sekine M."/>
            <person name="Hosoyama A."/>
            <person name="Yamada R."/>
            <person name="Fujisawa T."/>
            <person name="Omata S."/>
            <person name="Shimizu A."/>
            <person name="Tsukatani N."/>
            <person name="Tanikawa S."/>
            <person name="Fujita N."/>
            <person name="Harayama S."/>
        </authorList>
    </citation>
    <scope>NUCLEOTIDE SEQUENCE [LARGE SCALE GENOMIC DNA]</scope>
    <source>
        <strain>PR4 / NBRC 100887</strain>
    </source>
</reference>
<dbReference type="EC" id="2.7.2.3" evidence="1"/>
<dbReference type="EMBL" id="AP008957">
    <property type="protein sequence ID" value="BAH33738.1"/>
    <property type="molecule type" value="Genomic_DNA"/>
</dbReference>
<dbReference type="RefSeq" id="WP_019748389.1">
    <property type="nucleotide sequence ID" value="NC_012490.1"/>
</dbReference>
<dbReference type="SMR" id="C0ZZF3"/>
<dbReference type="KEGG" id="rer:RER_30300"/>
<dbReference type="eggNOG" id="COG0126">
    <property type="taxonomic scope" value="Bacteria"/>
</dbReference>
<dbReference type="HOGENOM" id="CLU_025427_0_2_11"/>
<dbReference type="UniPathway" id="UPA00109">
    <property type="reaction ID" value="UER00185"/>
</dbReference>
<dbReference type="Proteomes" id="UP000002204">
    <property type="component" value="Chromosome"/>
</dbReference>
<dbReference type="GO" id="GO:0005829">
    <property type="term" value="C:cytosol"/>
    <property type="evidence" value="ECO:0007669"/>
    <property type="project" value="TreeGrafter"/>
</dbReference>
<dbReference type="GO" id="GO:0043531">
    <property type="term" value="F:ADP binding"/>
    <property type="evidence" value="ECO:0007669"/>
    <property type="project" value="TreeGrafter"/>
</dbReference>
<dbReference type="GO" id="GO:0005524">
    <property type="term" value="F:ATP binding"/>
    <property type="evidence" value="ECO:0007669"/>
    <property type="project" value="UniProtKB-KW"/>
</dbReference>
<dbReference type="GO" id="GO:0004618">
    <property type="term" value="F:phosphoglycerate kinase activity"/>
    <property type="evidence" value="ECO:0007669"/>
    <property type="project" value="UniProtKB-UniRule"/>
</dbReference>
<dbReference type="GO" id="GO:0006094">
    <property type="term" value="P:gluconeogenesis"/>
    <property type="evidence" value="ECO:0007669"/>
    <property type="project" value="TreeGrafter"/>
</dbReference>
<dbReference type="GO" id="GO:0006096">
    <property type="term" value="P:glycolytic process"/>
    <property type="evidence" value="ECO:0007669"/>
    <property type="project" value="UniProtKB-UniRule"/>
</dbReference>
<dbReference type="CDD" id="cd00318">
    <property type="entry name" value="Phosphoglycerate_kinase"/>
    <property type="match status" value="1"/>
</dbReference>
<dbReference type="FunFam" id="3.40.50.1260:FF:000003">
    <property type="entry name" value="Phosphoglycerate kinase"/>
    <property type="match status" value="1"/>
</dbReference>
<dbReference type="FunFam" id="3.40.50.1260:FF:000006">
    <property type="entry name" value="Phosphoglycerate kinase"/>
    <property type="match status" value="1"/>
</dbReference>
<dbReference type="Gene3D" id="3.40.50.1260">
    <property type="entry name" value="Phosphoglycerate kinase, N-terminal domain"/>
    <property type="match status" value="2"/>
</dbReference>
<dbReference type="HAMAP" id="MF_00145">
    <property type="entry name" value="Phosphoglyc_kinase"/>
    <property type="match status" value="1"/>
</dbReference>
<dbReference type="InterPro" id="IPR001576">
    <property type="entry name" value="Phosphoglycerate_kinase"/>
</dbReference>
<dbReference type="InterPro" id="IPR015911">
    <property type="entry name" value="Phosphoglycerate_kinase_CS"/>
</dbReference>
<dbReference type="InterPro" id="IPR015824">
    <property type="entry name" value="Phosphoglycerate_kinase_N"/>
</dbReference>
<dbReference type="InterPro" id="IPR036043">
    <property type="entry name" value="Phosphoglycerate_kinase_sf"/>
</dbReference>
<dbReference type="PANTHER" id="PTHR11406">
    <property type="entry name" value="PHOSPHOGLYCERATE KINASE"/>
    <property type="match status" value="1"/>
</dbReference>
<dbReference type="PANTHER" id="PTHR11406:SF23">
    <property type="entry name" value="PHOSPHOGLYCERATE KINASE 1, CHLOROPLASTIC-RELATED"/>
    <property type="match status" value="1"/>
</dbReference>
<dbReference type="Pfam" id="PF00162">
    <property type="entry name" value="PGK"/>
    <property type="match status" value="1"/>
</dbReference>
<dbReference type="PIRSF" id="PIRSF000724">
    <property type="entry name" value="Pgk"/>
    <property type="match status" value="1"/>
</dbReference>
<dbReference type="PRINTS" id="PR00477">
    <property type="entry name" value="PHGLYCKINASE"/>
</dbReference>
<dbReference type="SUPFAM" id="SSF53748">
    <property type="entry name" value="Phosphoglycerate kinase"/>
    <property type="match status" value="1"/>
</dbReference>
<dbReference type="PROSITE" id="PS00111">
    <property type="entry name" value="PGLYCERATE_KINASE"/>
    <property type="match status" value="1"/>
</dbReference>
<sequence>MAVQTLKDLLDAGVEGRTVLVRSDLNVPLDGGEITDPGRIVASAPTLRALAEGGAKVIVTAHLGRPDGQPDPKFSLAPVAAKLAEILGRNVQLAGDVVGQDALARSEGLTDGDVLMLENIRFDPRETSKDEAERVKLAKALVELVGDDGAFVSDGFGVVHRKQASVFDVAKLLPHYAGYLVGAEVEVLAKLTQDAARPYAVVLGGSKVSDKLAVIEALAPKVDTLVIGGGMFYTFLAAQGVSVGNSLCEESMIETCKGLLDRYADVIHIPQDVVVADSFSADAESKIVPFDKIPDGWMGLDIGPESVKRFAAILTGAKTVFWNGPMGVFEFPKFEAGTRGVAEAIVEATEKGAFSVVGGGDSAAAVRQLGIPDEGFSHISTGGGASLEYLEGKELPGIAVLEG</sequence>
<feature type="chain" id="PRO_1000203348" description="Phosphoglycerate kinase">
    <location>
        <begin position="1"/>
        <end position="403"/>
    </location>
</feature>
<feature type="binding site" evidence="1">
    <location>
        <begin position="24"/>
        <end position="26"/>
    </location>
    <ligand>
        <name>substrate</name>
    </ligand>
</feature>
<feature type="binding site" evidence="1">
    <location>
        <position position="39"/>
    </location>
    <ligand>
        <name>substrate</name>
    </ligand>
</feature>
<feature type="binding site" evidence="1">
    <location>
        <begin position="62"/>
        <end position="65"/>
    </location>
    <ligand>
        <name>substrate</name>
    </ligand>
</feature>
<feature type="binding site" evidence="1">
    <location>
        <position position="121"/>
    </location>
    <ligand>
        <name>substrate</name>
    </ligand>
</feature>
<feature type="binding site" evidence="1">
    <location>
        <position position="161"/>
    </location>
    <ligand>
        <name>substrate</name>
    </ligand>
</feature>
<feature type="binding site" evidence="1">
    <location>
        <position position="211"/>
    </location>
    <ligand>
        <name>ATP</name>
        <dbReference type="ChEBI" id="CHEBI:30616"/>
    </ligand>
</feature>
<feature type="binding site" evidence="1">
    <location>
        <position position="299"/>
    </location>
    <ligand>
        <name>ATP</name>
        <dbReference type="ChEBI" id="CHEBI:30616"/>
    </ligand>
</feature>
<feature type="binding site" evidence="1">
    <location>
        <position position="330"/>
    </location>
    <ligand>
        <name>ATP</name>
        <dbReference type="ChEBI" id="CHEBI:30616"/>
    </ligand>
</feature>
<feature type="binding site" evidence="1">
    <location>
        <begin position="359"/>
        <end position="362"/>
    </location>
    <ligand>
        <name>ATP</name>
        <dbReference type="ChEBI" id="CHEBI:30616"/>
    </ligand>
</feature>
<organism>
    <name type="scientific">Rhodococcus erythropolis (strain PR4 / NBRC 100887)</name>
    <dbReference type="NCBI Taxonomy" id="234621"/>
    <lineage>
        <taxon>Bacteria</taxon>
        <taxon>Bacillati</taxon>
        <taxon>Actinomycetota</taxon>
        <taxon>Actinomycetes</taxon>
        <taxon>Mycobacteriales</taxon>
        <taxon>Nocardiaceae</taxon>
        <taxon>Rhodococcus</taxon>
        <taxon>Rhodococcus erythropolis group</taxon>
    </lineage>
</organism>